<name>RS7_NITHX</name>
<sequence length="156" mass="17615">MSRRHSAEKREVLPDPKFGNVVITKFMNSVMYAGKKSVAEGIVYGALDLIEAKTRQGPLTVFEQALENVMPTIEVRSRRVGGATYQVPVEVRSTRRQALGIRWLIAAARGRNEKTMTERLSAELLDASNNRGSAVKKREDVHKMAEANRAFSHYRW</sequence>
<proteinExistence type="inferred from homology"/>
<organism>
    <name type="scientific">Nitrobacter hamburgensis (strain DSM 10229 / NCIMB 13809 / X14)</name>
    <dbReference type="NCBI Taxonomy" id="323097"/>
    <lineage>
        <taxon>Bacteria</taxon>
        <taxon>Pseudomonadati</taxon>
        <taxon>Pseudomonadota</taxon>
        <taxon>Alphaproteobacteria</taxon>
        <taxon>Hyphomicrobiales</taxon>
        <taxon>Nitrobacteraceae</taxon>
        <taxon>Nitrobacter</taxon>
    </lineage>
</organism>
<evidence type="ECO:0000255" key="1">
    <source>
        <dbReference type="HAMAP-Rule" id="MF_00480"/>
    </source>
</evidence>
<evidence type="ECO:0000305" key="2"/>
<accession>Q1QN34</accession>
<feature type="chain" id="PRO_1000014244" description="Small ribosomal subunit protein uS7">
    <location>
        <begin position="1"/>
        <end position="156"/>
    </location>
</feature>
<keyword id="KW-1185">Reference proteome</keyword>
<keyword id="KW-0687">Ribonucleoprotein</keyword>
<keyword id="KW-0689">Ribosomal protein</keyword>
<keyword id="KW-0694">RNA-binding</keyword>
<keyword id="KW-0699">rRNA-binding</keyword>
<keyword id="KW-0820">tRNA-binding</keyword>
<protein>
    <recommendedName>
        <fullName evidence="1">Small ribosomal subunit protein uS7</fullName>
    </recommendedName>
    <alternativeName>
        <fullName evidence="2">30S ribosomal protein S7</fullName>
    </alternativeName>
</protein>
<comment type="function">
    <text evidence="1">One of the primary rRNA binding proteins, it binds directly to 16S rRNA where it nucleates assembly of the head domain of the 30S subunit. Is located at the subunit interface close to the decoding center, probably blocks exit of the E-site tRNA.</text>
</comment>
<comment type="subunit">
    <text evidence="1">Part of the 30S ribosomal subunit. Contacts proteins S9 and S11.</text>
</comment>
<comment type="similarity">
    <text evidence="1">Belongs to the universal ribosomal protein uS7 family.</text>
</comment>
<gene>
    <name evidence="1" type="primary">rpsG</name>
    <name type="ordered locus">Nham_1541</name>
</gene>
<dbReference type="EMBL" id="CP000319">
    <property type="protein sequence ID" value="ABE62363.1"/>
    <property type="molecule type" value="Genomic_DNA"/>
</dbReference>
<dbReference type="RefSeq" id="WP_011510051.1">
    <property type="nucleotide sequence ID" value="NC_007964.1"/>
</dbReference>
<dbReference type="SMR" id="Q1QN34"/>
<dbReference type="STRING" id="323097.Nham_1541"/>
<dbReference type="KEGG" id="nha:Nham_1541"/>
<dbReference type="eggNOG" id="COG0049">
    <property type="taxonomic scope" value="Bacteria"/>
</dbReference>
<dbReference type="HOGENOM" id="CLU_072226_1_1_5"/>
<dbReference type="OrthoDB" id="9807653at2"/>
<dbReference type="Proteomes" id="UP000001953">
    <property type="component" value="Chromosome"/>
</dbReference>
<dbReference type="GO" id="GO:0015935">
    <property type="term" value="C:small ribosomal subunit"/>
    <property type="evidence" value="ECO:0007669"/>
    <property type="project" value="InterPro"/>
</dbReference>
<dbReference type="GO" id="GO:0019843">
    <property type="term" value="F:rRNA binding"/>
    <property type="evidence" value="ECO:0007669"/>
    <property type="project" value="UniProtKB-UniRule"/>
</dbReference>
<dbReference type="GO" id="GO:0003735">
    <property type="term" value="F:structural constituent of ribosome"/>
    <property type="evidence" value="ECO:0007669"/>
    <property type="project" value="InterPro"/>
</dbReference>
<dbReference type="GO" id="GO:0000049">
    <property type="term" value="F:tRNA binding"/>
    <property type="evidence" value="ECO:0007669"/>
    <property type="project" value="UniProtKB-UniRule"/>
</dbReference>
<dbReference type="GO" id="GO:0006412">
    <property type="term" value="P:translation"/>
    <property type="evidence" value="ECO:0007669"/>
    <property type="project" value="UniProtKB-UniRule"/>
</dbReference>
<dbReference type="CDD" id="cd14869">
    <property type="entry name" value="uS7_Bacteria"/>
    <property type="match status" value="1"/>
</dbReference>
<dbReference type="FunFam" id="1.10.455.10:FF:000001">
    <property type="entry name" value="30S ribosomal protein S7"/>
    <property type="match status" value="1"/>
</dbReference>
<dbReference type="Gene3D" id="1.10.455.10">
    <property type="entry name" value="Ribosomal protein S7 domain"/>
    <property type="match status" value="1"/>
</dbReference>
<dbReference type="HAMAP" id="MF_00480_B">
    <property type="entry name" value="Ribosomal_uS7_B"/>
    <property type="match status" value="1"/>
</dbReference>
<dbReference type="InterPro" id="IPR000235">
    <property type="entry name" value="Ribosomal_uS7"/>
</dbReference>
<dbReference type="InterPro" id="IPR005717">
    <property type="entry name" value="Ribosomal_uS7_bac/org-type"/>
</dbReference>
<dbReference type="InterPro" id="IPR020606">
    <property type="entry name" value="Ribosomal_uS7_CS"/>
</dbReference>
<dbReference type="InterPro" id="IPR023798">
    <property type="entry name" value="Ribosomal_uS7_dom"/>
</dbReference>
<dbReference type="InterPro" id="IPR036823">
    <property type="entry name" value="Ribosomal_uS7_dom_sf"/>
</dbReference>
<dbReference type="NCBIfam" id="TIGR01029">
    <property type="entry name" value="rpsG_bact"/>
    <property type="match status" value="1"/>
</dbReference>
<dbReference type="PANTHER" id="PTHR11205">
    <property type="entry name" value="RIBOSOMAL PROTEIN S7"/>
    <property type="match status" value="1"/>
</dbReference>
<dbReference type="Pfam" id="PF00177">
    <property type="entry name" value="Ribosomal_S7"/>
    <property type="match status" value="1"/>
</dbReference>
<dbReference type="PIRSF" id="PIRSF002122">
    <property type="entry name" value="RPS7p_RPS7a_RPS5e_RPS7o"/>
    <property type="match status" value="1"/>
</dbReference>
<dbReference type="SUPFAM" id="SSF47973">
    <property type="entry name" value="Ribosomal protein S7"/>
    <property type="match status" value="1"/>
</dbReference>
<dbReference type="PROSITE" id="PS00052">
    <property type="entry name" value="RIBOSOMAL_S7"/>
    <property type="match status" value="1"/>
</dbReference>
<reference key="1">
    <citation type="submission" date="2006-03" db="EMBL/GenBank/DDBJ databases">
        <title>Complete sequence of chromosome of Nitrobacter hamburgensis X14.</title>
        <authorList>
            <consortium name="US DOE Joint Genome Institute"/>
            <person name="Copeland A."/>
            <person name="Lucas S."/>
            <person name="Lapidus A."/>
            <person name="Barry K."/>
            <person name="Detter J.C."/>
            <person name="Glavina del Rio T."/>
            <person name="Hammon N."/>
            <person name="Israni S."/>
            <person name="Dalin E."/>
            <person name="Tice H."/>
            <person name="Pitluck S."/>
            <person name="Chain P."/>
            <person name="Malfatti S."/>
            <person name="Shin M."/>
            <person name="Vergez L."/>
            <person name="Schmutz J."/>
            <person name="Larimer F."/>
            <person name="Land M."/>
            <person name="Hauser L."/>
            <person name="Kyrpides N."/>
            <person name="Ivanova N."/>
            <person name="Ward B."/>
            <person name="Arp D."/>
            <person name="Klotz M."/>
            <person name="Stein L."/>
            <person name="O'Mullan G."/>
            <person name="Starkenburg S."/>
            <person name="Sayavedra L."/>
            <person name="Poret-Peterson A.T."/>
            <person name="Gentry M.E."/>
            <person name="Bruce D."/>
            <person name="Richardson P."/>
        </authorList>
    </citation>
    <scope>NUCLEOTIDE SEQUENCE [LARGE SCALE GENOMIC DNA]</scope>
    <source>
        <strain>DSM 10229 / NCIMB 13809 / X14</strain>
    </source>
</reference>